<reference key="1">
    <citation type="journal article" date="1995" name="Science">
        <title>The minimal gene complement of Mycoplasma genitalium.</title>
        <authorList>
            <person name="Fraser C.M."/>
            <person name="Gocayne J.D."/>
            <person name="White O."/>
            <person name="Adams M.D."/>
            <person name="Clayton R.A."/>
            <person name="Fleischmann R.D."/>
            <person name="Bult C.J."/>
            <person name="Kerlavage A.R."/>
            <person name="Sutton G.G."/>
            <person name="Kelley J.M."/>
            <person name="Fritchman J.L."/>
            <person name="Weidman J.F."/>
            <person name="Small K.V."/>
            <person name="Sandusky M."/>
            <person name="Fuhrmann J.L."/>
            <person name="Nguyen D.T."/>
            <person name="Utterback T.R."/>
            <person name="Saudek D.M."/>
            <person name="Phillips C.A."/>
            <person name="Merrick J.M."/>
            <person name="Tomb J.-F."/>
            <person name="Dougherty B.A."/>
            <person name="Bott K.F."/>
            <person name="Hu P.-C."/>
            <person name="Lucier T.S."/>
            <person name="Peterson S.N."/>
            <person name="Smith H.O."/>
            <person name="Hutchison C.A. III"/>
            <person name="Venter J.C."/>
        </authorList>
    </citation>
    <scope>NUCLEOTIDE SEQUENCE [LARGE SCALE GENOMIC DNA]</scope>
    <source>
        <strain>ATCC 33530 / DSM 19775 / NCTC 10195 / G37</strain>
    </source>
</reference>
<keyword id="KW-1185">Reference proteome</keyword>
<keyword id="KW-0678">Repressor</keyword>
<keyword id="KW-0687">Ribonucleoprotein</keyword>
<keyword id="KW-0689">Ribosomal protein</keyword>
<keyword id="KW-0694">RNA-binding</keyword>
<keyword id="KW-0699">rRNA-binding</keyword>
<keyword id="KW-0810">Translation regulation</keyword>
<keyword id="KW-0820">tRNA-binding</keyword>
<sequence>MKKLSKRMQAVTKLIDKNKLYPIQEAFELIKKTAITKFVSSVDIAVSLNLDTTKAEQQLRGAIAFPFSIGKSIRILAITDDEKKASEAGADFVGGLDKIEAIKNGWLDFDLIITSPKFMGALGKLGKLLGTRGLMPNPKTETVTDDVVSAIKAYKKGKKEYRTDSFGNIHLSLGKTDTKTEHLVANAMALIDLIKSKRPSTVKGTYIKNIALTTTMGPSLKVKLPD</sequence>
<protein>
    <recommendedName>
        <fullName evidence="1">Large ribosomal subunit protein uL1</fullName>
    </recommendedName>
    <alternativeName>
        <fullName evidence="2">50S ribosomal protein L1</fullName>
    </alternativeName>
</protein>
<proteinExistence type="inferred from homology"/>
<feature type="chain" id="PRO_0000125687" description="Large ribosomal subunit protein uL1">
    <location>
        <begin position="1"/>
        <end position="226"/>
    </location>
</feature>
<evidence type="ECO:0000255" key="1">
    <source>
        <dbReference type="HAMAP-Rule" id="MF_01318"/>
    </source>
</evidence>
<evidence type="ECO:0000305" key="2"/>
<comment type="function">
    <text evidence="1">Binds directly to 23S rRNA. The L1 stalk is quite mobile in the ribosome, and is involved in E site tRNA release.</text>
</comment>
<comment type="function">
    <text evidence="1">Protein L1 is also a translational repressor protein, it controls the translation of the L11 operon by binding to its mRNA.</text>
</comment>
<comment type="subunit">
    <text evidence="1">Part of the 50S ribosomal subunit.</text>
</comment>
<comment type="similarity">
    <text evidence="1">Belongs to the universal ribosomal protein uL1 family.</text>
</comment>
<name>RL1_MYCGE</name>
<dbReference type="EMBL" id="L43967">
    <property type="protein sequence ID" value="AAC71300.1"/>
    <property type="molecule type" value="Genomic_DNA"/>
</dbReference>
<dbReference type="EMBL" id="U02113">
    <property type="protein sequence ID" value="AAD12387.1"/>
    <property type="status" value="ALT_SEQ"/>
    <property type="molecule type" value="Genomic_DNA"/>
</dbReference>
<dbReference type="PIR" id="A64209">
    <property type="entry name" value="A64209"/>
</dbReference>
<dbReference type="RefSeq" id="WP_010869323.1">
    <property type="nucleotide sequence ID" value="NC_000908.2"/>
</dbReference>
<dbReference type="SMR" id="P47328"/>
<dbReference type="FunCoup" id="P47328">
    <property type="interactions" value="227"/>
</dbReference>
<dbReference type="STRING" id="243273.MG_082"/>
<dbReference type="GeneID" id="88282205"/>
<dbReference type="KEGG" id="mge:MG_082"/>
<dbReference type="eggNOG" id="COG0081">
    <property type="taxonomic scope" value="Bacteria"/>
</dbReference>
<dbReference type="HOGENOM" id="CLU_062853_0_0_14"/>
<dbReference type="InParanoid" id="P47328"/>
<dbReference type="OrthoDB" id="9803740at2"/>
<dbReference type="BioCyc" id="MGEN243273:G1GJ2-94-MONOMER"/>
<dbReference type="Proteomes" id="UP000000807">
    <property type="component" value="Chromosome"/>
</dbReference>
<dbReference type="GO" id="GO:0015934">
    <property type="term" value="C:large ribosomal subunit"/>
    <property type="evidence" value="ECO:0007669"/>
    <property type="project" value="InterPro"/>
</dbReference>
<dbReference type="GO" id="GO:0019843">
    <property type="term" value="F:rRNA binding"/>
    <property type="evidence" value="ECO:0007669"/>
    <property type="project" value="UniProtKB-UniRule"/>
</dbReference>
<dbReference type="GO" id="GO:0003735">
    <property type="term" value="F:structural constituent of ribosome"/>
    <property type="evidence" value="ECO:0007669"/>
    <property type="project" value="InterPro"/>
</dbReference>
<dbReference type="GO" id="GO:0000049">
    <property type="term" value="F:tRNA binding"/>
    <property type="evidence" value="ECO:0007669"/>
    <property type="project" value="UniProtKB-KW"/>
</dbReference>
<dbReference type="GO" id="GO:0006417">
    <property type="term" value="P:regulation of translation"/>
    <property type="evidence" value="ECO:0007669"/>
    <property type="project" value="UniProtKB-KW"/>
</dbReference>
<dbReference type="GO" id="GO:0006412">
    <property type="term" value="P:translation"/>
    <property type="evidence" value="ECO:0007669"/>
    <property type="project" value="UniProtKB-UniRule"/>
</dbReference>
<dbReference type="CDD" id="cd00403">
    <property type="entry name" value="Ribosomal_L1"/>
    <property type="match status" value="1"/>
</dbReference>
<dbReference type="FunFam" id="3.40.50.790:FF:000001">
    <property type="entry name" value="50S ribosomal protein L1"/>
    <property type="match status" value="1"/>
</dbReference>
<dbReference type="Gene3D" id="3.30.190.20">
    <property type="match status" value="1"/>
</dbReference>
<dbReference type="Gene3D" id="3.40.50.790">
    <property type="match status" value="1"/>
</dbReference>
<dbReference type="HAMAP" id="MF_01318_B">
    <property type="entry name" value="Ribosomal_uL1_B"/>
    <property type="match status" value="1"/>
</dbReference>
<dbReference type="InterPro" id="IPR005878">
    <property type="entry name" value="Ribosom_uL1_bac-type"/>
</dbReference>
<dbReference type="InterPro" id="IPR002143">
    <property type="entry name" value="Ribosomal_uL1"/>
</dbReference>
<dbReference type="InterPro" id="IPR023674">
    <property type="entry name" value="Ribosomal_uL1-like"/>
</dbReference>
<dbReference type="InterPro" id="IPR028364">
    <property type="entry name" value="Ribosomal_uL1/biogenesis"/>
</dbReference>
<dbReference type="InterPro" id="IPR016095">
    <property type="entry name" value="Ribosomal_uL1_3-a/b-sand"/>
</dbReference>
<dbReference type="InterPro" id="IPR023673">
    <property type="entry name" value="Ribosomal_uL1_CS"/>
</dbReference>
<dbReference type="NCBIfam" id="TIGR01169">
    <property type="entry name" value="rplA_bact"/>
    <property type="match status" value="1"/>
</dbReference>
<dbReference type="PANTHER" id="PTHR36427">
    <property type="entry name" value="54S RIBOSOMAL PROTEIN L1, MITOCHONDRIAL"/>
    <property type="match status" value="1"/>
</dbReference>
<dbReference type="PANTHER" id="PTHR36427:SF3">
    <property type="entry name" value="LARGE RIBOSOMAL SUBUNIT PROTEIN UL1M"/>
    <property type="match status" value="1"/>
</dbReference>
<dbReference type="Pfam" id="PF00687">
    <property type="entry name" value="Ribosomal_L1"/>
    <property type="match status" value="1"/>
</dbReference>
<dbReference type="PIRSF" id="PIRSF002155">
    <property type="entry name" value="Ribosomal_L1"/>
    <property type="match status" value="1"/>
</dbReference>
<dbReference type="SUPFAM" id="SSF56808">
    <property type="entry name" value="Ribosomal protein L1"/>
    <property type="match status" value="1"/>
</dbReference>
<dbReference type="PROSITE" id="PS01199">
    <property type="entry name" value="RIBOSOMAL_L1"/>
    <property type="match status" value="1"/>
</dbReference>
<organism>
    <name type="scientific">Mycoplasma genitalium (strain ATCC 33530 / DSM 19775 / NCTC 10195 / G37)</name>
    <name type="common">Mycoplasmoides genitalium</name>
    <dbReference type="NCBI Taxonomy" id="243273"/>
    <lineage>
        <taxon>Bacteria</taxon>
        <taxon>Bacillati</taxon>
        <taxon>Mycoplasmatota</taxon>
        <taxon>Mycoplasmoidales</taxon>
        <taxon>Mycoplasmoidaceae</taxon>
        <taxon>Mycoplasmoides</taxon>
    </lineage>
</organism>
<accession>P47328</accession>
<accession>Q59520</accession>
<gene>
    <name evidence="1" type="primary">rplA</name>
    <name evidence="1" type="synonym">rpl1</name>
    <name type="ordered locus">MG082</name>
</gene>